<accession>Q96678</accession>
<evidence type="ECO:0000305" key="1"/>
<name>E1BS_ADECR</name>
<feature type="chain" id="PRO_0000221719" description="E1B protein, small T-antigen">
    <location>
        <begin position="1"/>
        <end position="169"/>
    </location>
</feature>
<dbReference type="EMBL" id="Y07760">
    <property type="protein sequence ID" value="CAA69053.1"/>
    <property type="molecule type" value="Genomic_DNA"/>
</dbReference>
<dbReference type="RefSeq" id="AP_000046.1">
    <property type="nucleotide sequence ID" value="AC_000003.1"/>
</dbReference>
<dbReference type="RefSeq" id="NP_044185.1">
    <property type="nucleotide sequence ID" value="NC_001734.1"/>
</dbReference>
<dbReference type="GeneID" id="1488946"/>
<dbReference type="KEGG" id="vg:1488946"/>
<dbReference type="Proteomes" id="UP000126130">
    <property type="component" value="Segment"/>
</dbReference>
<dbReference type="GO" id="GO:0033668">
    <property type="term" value="P:symbiont-mediated suppression of host apoptosis"/>
    <property type="evidence" value="ECO:0007669"/>
    <property type="project" value="UniProtKB-KW"/>
</dbReference>
<dbReference type="InterPro" id="IPR002924">
    <property type="entry name" value="Adenovir_t-Ag_E1B_19kDa"/>
</dbReference>
<dbReference type="InterPro" id="IPR002475">
    <property type="entry name" value="Bcl2-like"/>
</dbReference>
<dbReference type="Pfam" id="PF01691">
    <property type="entry name" value="Adeno_E1B_19K"/>
    <property type="match status" value="1"/>
</dbReference>
<dbReference type="PROSITE" id="PS50062">
    <property type="entry name" value="BCL2_FAMILY"/>
    <property type="match status" value="1"/>
</dbReference>
<comment type="similarity">
    <text evidence="1">Belongs to the adenoviridae E1B 19 kDa protein family.</text>
</comment>
<proteinExistence type="inferred from homology"/>
<organismHost>
    <name type="scientific">Canis lupus familiaris</name>
    <name type="common">Dog</name>
    <name type="synonym">Canis familiaris</name>
    <dbReference type="NCBI Taxonomy" id="9615"/>
</organismHost>
<sequence>MDPLKICENYLTFRSIIKGSTFSPGVFRRWRFHALADVVGNIVEREEGRFWEIVPETHTLWALFRGGFTVAPFTEILTSLQLENRGRQLAFLAFLSFLLRNWPSDSVVSEDARLDLVCAPAWSRIQIWSQAARLINDLPESVFEGQGSVVEEECGEEHLARDSDDPFFD</sequence>
<keyword id="KW-0244">Early protein</keyword>
<keyword id="KW-0945">Host-virus interaction</keyword>
<keyword id="KW-1081">Inhibition of host apoptosis by viral BCL2-like protein</keyword>
<keyword id="KW-1119">Modulation of host cell apoptosis by virus</keyword>
<reference key="1">
    <citation type="journal article" date="1997" name="J. Gen. Virol.">
        <title>Complete DNA sequence of canine adenovirus type 1.</title>
        <authorList>
            <person name="Morrison M.D."/>
            <person name="Onions D.E."/>
            <person name="Nicolson L."/>
        </authorList>
    </citation>
    <scope>NUCLEOTIDE SEQUENCE [LARGE SCALE GENOMIC DNA]</scope>
</reference>
<protein>
    <recommendedName>
        <fullName>E1B protein, small T-antigen</fullName>
    </recommendedName>
    <alternativeName>
        <fullName>E1B 19 kDa protein</fullName>
        <shortName>E1B-19K</shortName>
    </alternativeName>
</protein>
<organism>
    <name type="scientific">Canine adenovirus serotype 1 (strain RI261)</name>
    <name type="common">CAdV-1</name>
    <name type="synonym">Canine adenovirus 1 (strain RI261)</name>
    <dbReference type="NCBI Taxonomy" id="69151"/>
    <lineage>
        <taxon>Viruses</taxon>
        <taxon>Varidnaviria</taxon>
        <taxon>Bamfordvirae</taxon>
        <taxon>Preplasmiviricota</taxon>
        <taxon>Tectiliviricetes</taxon>
        <taxon>Rowavirales</taxon>
        <taxon>Adenoviridae</taxon>
        <taxon>Mastadenovirus</taxon>
        <taxon>Canine mastadenovirus A</taxon>
    </lineage>
</organism>